<reference key="1">
    <citation type="journal article" date="2002" name="Science">
        <title>50 million years of genomic stasis in endosymbiotic bacteria.</title>
        <authorList>
            <person name="Tamas I."/>
            <person name="Klasson L."/>
            <person name="Canbaeck B."/>
            <person name="Naeslund A.K."/>
            <person name="Eriksson A.-S."/>
            <person name="Wernegreen J.J."/>
            <person name="Sandstroem J.P."/>
            <person name="Moran N.A."/>
            <person name="Andersson S.G.E."/>
        </authorList>
    </citation>
    <scope>NUCLEOTIDE SEQUENCE [LARGE SCALE GENOMIC DNA]</scope>
    <source>
        <strain>Sg</strain>
    </source>
</reference>
<accession>Q8KA32</accession>
<dbReference type="EMBL" id="AE013218">
    <property type="protein sequence ID" value="AAM67650.1"/>
    <property type="molecule type" value="Genomic_DNA"/>
</dbReference>
<dbReference type="RefSeq" id="WP_011053616.1">
    <property type="nucleotide sequence ID" value="NC_004061.1"/>
</dbReference>
<dbReference type="STRING" id="198804.BUsg_080"/>
<dbReference type="GeneID" id="93003548"/>
<dbReference type="KEGG" id="bas:BUsg_080"/>
<dbReference type="eggNOG" id="COG2911">
    <property type="taxonomic scope" value="Bacteria"/>
</dbReference>
<dbReference type="HOGENOM" id="CLU_306047_0_0_6"/>
<dbReference type="Proteomes" id="UP000000416">
    <property type="component" value="Chromosome"/>
</dbReference>
<dbReference type="GO" id="GO:0016020">
    <property type="term" value="C:membrane"/>
    <property type="evidence" value="ECO:0007669"/>
    <property type="project" value="UniProtKB-SubCell"/>
</dbReference>
<dbReference type="PANTHER" id="PTHR36985">
    <property type="entry name" value="TRANSLOCATION AND ASSEMBLY MODULE SUBUNIT TAMB"/>
    <property type="match status" value="1"/>
</dbReference>
<dbReference type="PANTHER" id="PTHR36985:SF1">
    <property type="entry name" value="TRANSLOCATION AND ASSEMBLY MODULE SUBUNIT TAMB"/>
    <property type="match status" value="1"/>
</dbReference>
<sequence>MSLYQRYLSKSLIFIFSLFFLILFFLESSIGFKYFFNFTNYFFIGLKTEEISGNWRDFKLKKINFNIFGTSIKAESVHIITDPISLFKVSTILKKIKTKNLVISFNKKIKKVALKNNFLKEKKIKNTIFFKHSLILRKIYSDKILLKTQKKNIFLFGVFSGLQLSNDTCTFLPTKINSIYIDSSMRNVKNIDNKKSNFFIKKDIFYRNKIDNALSFFSIFKNFFIPININLINLKCNQLKFFNRTFLDIYKIKMSAQLKKNILKIKKIQIYSKYFKTKSKGKIFFRSDFSIFFIVKNEMSINIINNKAMNLLFKDTIDHKLNFKSNNLIKFNIHGEISLDDLNYPIHINLHLNRLFLPISKNLILSSKNFNFSLKGKINNYFLSLKNIINISGMPSFFISISAIGNIQNVVIKKIHFFPFFKEIKTKKFIKIKKEIDYNKYITQLAGKMRILSDFNKQSSNIFLPYFHVYGDFMRKKISVLGSLYYRKLNGITIPRINFLLGKNKGHISGSISKKVNLRSSIYANNLNYFSPNLKGIIKATLNIYSFCSLPSFSSVILGQKINWKNILYFNNIKITTNGNLKKSFPNKFFADFKNIRFSKFHINSLHIKSDWNNINQKFSLSLKDKKLSITFILNGHLNRKVGIWKGVLKKIDVKTSWGQWISRNNPLIFYHIKNSINFKNIKKIKNKNAFYSAINNIQTSLFKLIRQSPVKFQTDLFFNTQFQWKLRENITNLKLFLKGSNINLEKKIKEKIMFEKISAVNLYINFKKNNFITKWIIKKSKNSLKVNKISGFLNIYDFFHEKKIEGKVFLSDFSCSFLNFFENFFTKIQGKFSGNINFLGTIYQPQISADINFQDFYIKSDKIFKYMLLFFCSFPNKIENIKINQEIIMKKGNALFKLNSVVKNNISHIKWNILFHSNKLAIVLFPKIKLNFSSQLNLYYFLSKYDLIGYLKFSFFSFKINEKNFLF</sequence>
<gene>
    <name type="ordered locus">BUsg_080</name>
</gene>
<proteinExistence type="predicted"/>
<protein>
    <recommendedName>
        <fullName>Uncharacterized protein BUsg_080</fullName>
    </recommendedName>
</protein>
<keyword id="KW-0472">Membrane</keyword>
<keyword id="KW-0812">Transmembrane</keyword>
<keyword id="KW-1133">Transmembrane helix</keyword>
<comment type="subcellular location">
    <subcellularLocation>
        <location evidence="2">Membrane</location>
        <topology evidence="2">Single-pass membrane protein</topology>
    </subcellularLocation>
</comment>
<comment type="similarity">
    <text evidence="2">To E.coli YtfN.</text>
</comment>
<evidence type="ECO:0000255" key="1"/>
<evidence type="ECO:0000305" key="2"/>
<name>Y080_BUCAP</name>
<feature type="chain" id="PRO_0000216247" description="Uncharacterized protein BUsg_080">
    <location>
        <begin position="1"/>
        <end position="968"/>
    </location>
</feature>
<feature type="transmembrane region" description="Helical" evidence="1">
    <location>
        <begin position="12"/>
        <end position="32"/>
    </location>
</feature>
<organism>
    <name type="scientific">Buchnera aphidicola subsp. Schizaphis graminum (strain Sg)</name>
    <dbReference type="NCBI Taxonomy" id="198804"/>
    <lineage>
        <taxon>Bacteria</taxon>
        <taxon>Pseudomonadati</taxon>
        <taxon>Pseudomonadota</taxon>
        <taxon>Gammaproteobacteria</taxon>
        <taxon>Enterobacterales</taxon>
        <taxon>Erwiniaceae</taxon>
        <taxon>Buchnera</taxon>
    </lineage>
</organism>